<sequence>MRCPKCGATKSSVIDSRQAEEGNTIRRRRECDECQHRFTTYERVEERTLVVVKKDGTREQFSRDKIFNGIIRSAQKRPVSSDEINMVVNRIEQKLRGRNENEIQSEDIGSLVMEELAELDEITYVRFASVYRSFKDVSELESLLQQITQSSKKKKER</sequence>
<dbReference type="EMBL" id="AE007317">
    <property type="protein sequence ID" value="AAL00361.1"/>
    <property type="status" value="ALT_INIT"/>
    <property type="molecule type" value="Genomic_DNA"/>
</dbReference>
<dbReference type="PIR" id="D98066">
    <property type="entry name" value="D98066"/>
</dbReference>
<dbReference type="RefSeq" id="NP_359150.2">
    <property type="nucleotide sequence ID" value="NC_003098.1"/>
</dbReference>
<dbReference type="RefSeq" id="WP_001203672.1">
    <property type="nucleotide sequence ID" value="NC_003098.1"/>
</dbReference>
<dbReference type="SMR" id="P67319"/>
<dbReference type="STRING" id="171101.spr1557"/>
<dbReference type="GeneID" id="93740109"/>
<dbReference type="KEGG" id="spr:spr1557"/>
<dbReference type="PATRIC" id="fig|171101.6.peg.1681"/>
<dbReference type="eggNOG" id="COG1327">
    <property type="taxonomic scope" value="Bacteria"/>
</dbReference>
<dbReference type="HOGENOM" id="CLU_108412_0_0_9"/>
<dbReference type="Proteomes" id="UP000000586">
    <property type="component" value="Chromosome"/>
</dbReference>
<dbReference type="GO" id="GO:0005524">
    <property type="term" value="F:ATP binding"/>
    <property type="evidence" value="ECO:0007669"/>
    <property type="project" value="UniProtKB-KW"/>
</dbReference>
<dbReference type="GO" id="GO:0003690">
    <property type="term" value="F:double-stranded DNA binding"/>
    <property type="evidence" value="ECO:0000318"/>
    <property type="project" value="GO_Central"/>
</dbReference>
<dbReference type="GO" id="GO:0008270">
    <property type="term" value="F:zinc ion binding"/>
    <property type="evidence" value="ECO:0007669"/>
    <property type="project" value="UniProtKB-UniRule"/>
</dbReference>
<dbReference type="GO" id="GO:0045892">
    <property type="term" value="P:negative regulation of DNA-templated transcription"/>
    <property type="evidence" value="ECO:0000318"/>
    <property type="project" value="GO_Central"/>
</dbReference>
<dbReference type="HAMAP" id="MF_00440">
    <property type="entry name" value="NrdR"/>
    <property type="match status" value="1"/>
</dbReference>
<dbReference type="InterPro" id="IPR005144">
    <property type="entry name" value="ATP-cone_dom"/>
</dbReference>
<dbReference type="InterPro" id="IPR055173">
    <property type="entry name" value="NrdR-like_N"/>
</dbReference>
<dbReference type="InterPro" id="IPR003796">
    <property type="entry name" value="RNR_NrdR-like"/>
</dbReference>
<dbReference type="NCBIfam" id="TIGR00244">
    <property type="entry name" value="transcriptional regulator NrdR"/>
    <property type="match status" value="1"/>
</dbReference>
<dbReference type="PANTHER" id="PTHR30455">
    <property type="entry name" value="TRANSCRIPTIONAL REPRESSOR NRDR"/>
    <property type="match status" value="1"/>
</dbReference>
<dbReference type="PANTHER" id="PTHR30455:SF2">
    <property type="entry name" value="TRANSCRIPTIONAL REPRESSOR NRDR"/>
    <property type="match status" value="1"/>
</dbReference>
<dbReference type="Pfam" id="PF03477">
    <property type="entry name" value="ATP-cone"/>
    <property type="match status" value="1"/>
</dbReference>
<dbReference type="Pfam" id="PF22811">
    <property type="entry name" value="Zn_ribbon_NrdR"/>
    <property type="match status" value="1"/>
</dbReference>
<dbReference type="PROSITE" id="PS51161">
    <property type="entry name" value="ATP_CONE"/>
    <property type="match status" value="1"/>
</dbReference>
<protein>
    <recommendedName>
        <fullName evidence="1">Transcriptional repressor NrdR</fullName>
    </recommendedName>
</protein>
<gene>
    <name evidence="1" type="primary">nrdR</name>
    <name type="ordered locus">spr1557</name>
</gene>
<name>NRDR_STRR6</name>
<evidence type="ECO:0000255" key="1">
    <source>
        <dbReference type="HAMAP-Rule" id="MF_00440"/>
    </source>
</evidence>
<evidence type="ECO:0000256" key="2">
    <source>
        <dbReference type="SAM" id="MobiDB-lite"/>
    </source>
</evidence>
<evidence type="ECO:0000305" key="3"/>
<accession>P67319</accession>
<accession>P58260</accession>
<comment type="function">
    <text evidence="1">Negatively regulates transcription of bacterial ribonucleotide reductase nrd genes and operons by binding to NrdR-boxes.</text>
</comment>
<comment type="cofactor">
    <cofactor evidence="1">
        <name>Zn(2+)</name>
        <dbReference type="ChEBI" id="CHEBI:29105"/>
    </cofactor>
    <text evidence="1">Binds 1 zinc ion.</text>
</comment>
<comment type="similarity">
    <text evidence="1">Belongs to the NrdR family.</text>
</comment>
<comment type="sequence caution" evidence="3">
    <conflict type="erroneous initiation">
        <sequence resource="EMBL-CDS" id="AAL00361"/>
    </conflict>
</comment>
<proteinExistence type="inferred from homology"/>
<organism>
    <name type="scientific">Streptococcus pneumoniae (strain ATCC BAA-255 / R6)</name>
    <dbReference type="NCBI Taxonomy" id="171101"/>
    <lineage>
        <taxon>Bacteria</taxon>
        <taxon>Bacillati</taxon>
        <taxon>Bacillota</taxon>
        <taxon>Bacilli</taxon>
        <taxon>Lactobacillales</taxon>
        <taxon>Streptococcaceae</taxon>
        <taxon>Streptococcus</taxon>
    </lineage>
</organism>
<feature type="chain" id="PRO_0000182358" description="Transcriptional repressor NrdR">
    <location>
        <begin position="1"/>
        <end position="157"/>
    </location>
</feature>
<feature type="domain" description="ATP-cone" evidence="1">
    <location>
        <begin position="49"/>
        <end position="139"/>
    </location>
</feature>
<feature type="zinc finger region" evidence="1">
    <location>
        <begin position="3"/>
        <end position="34"/>
    </location>
</feature>
<feature type="region of interest" description="Disordered" evidence="2">
    <location>
        <begin position="1"/>
        <end position="22"/>
    </location>
</feature>
<reference key="1">
    <citation type="journal article" date="2001" name="J. Bacteriol.">
        <title>Genome of the bacterium Streptococcus pneumoniae strain R6.</title>
        <authorList>
            <person name="Hoskins J."/>
            <person name="Alborn W.E. Jr."/>
            <person name="Arnold J."/>
            <person name="Blaszczak L.C."/>
            <person name="Burgett S."/>
            <person name="DeHoff B.S."/>
            <person name="Estrem S.T."/>
            <person name="Fritz L."/>
            <person name="Fu D.-J."/>
            <person name="Fuller W."/>
            <person name="Geringer C."/>
            <person name="Gilmour R."/>
            <person name="Glass J.S."/>
            <person name="Khoja H."/>
            <person name="Kraft A.R."/>
            <person name="Lagace R.E."/>
            <person name="LeBlanc D.J."/>
            <person name="Lee L.N."/>
            <person name="Lefkowitz E.J."/>
            <person name="Lu J."/>
            <person name="Matsushima P."/>
            <person name="McAhren S.M."/>
            <person name="McHenney M."/>
            <person name="McLeaster K."/>
            <person name="Mundy C.W."/>
            <person name="Nicas T.I."/>
            <person name="Norris F.H."/>
            <person name="O'Gara M."/>
            <person name="Peery R.B."/>
            <person name="Robertson G.T."/>
            <person name="Rockey P."/>
            <person name="Sun P.-M."/>
            <person name="Winkler M.E."/>
            <person name="Yang Y."/>
            <person name="Young-Bellido M."/>
            <person name="Zhao G."/>
            <person name="Zook C.A."/>
            <person name="Baltz R.H."/>
            <person name="Jaskunas S.R."/>
            <person name="Rosteck P.R. Jr."/>
            <person name="Skatrud P.L."/>
            <person name="Glass J.I."/>
        </authorList>
    </citation>
    <scope>NUCLEOTIDE SEQUENCE [LARGE SCALE GENOMIC DNA]</scope>
    <source>
        <strain>ATCC BAA-255 / R6</strain>
    </source>
</reference>
<keyword id="KW-0067">ATP-binding</keyword>
<keyword id="KW-0238">DNA-binding</keyword>
<keyword id="KW-0479">Metal-binding</keyword>
<keyword id="KW-0547">Nucleotide-binding</keyword>
<keyword id="KW-1185">Reference proteome</keyword>
<keyword id="KW-0678">Repressor</keyword>
<keyword id="KW-0804">Transcription</keyword>
<keyword id="KW-0805">Transcription regulation</keyword>
<keyword id="KW-0862">Zinc</keyword>
<keyword id="KW-0863">Zinc-finger</keyword>